<dbReference type="EMBL" id="CP000323">
    <property type="protein sequence ID" value="ABE74172.1"/>
    <property type="molecule type" value="Genomic_DNA"/>
</dbReference>
<dbReference type="RefSeq" id="WP_011279657.1">
    <property type="nucleotide sequence ID" value="NC_007969.1"/>
</dbReference>
<dbReference type="SMR" id="Q1QDT1"/>
<dbReference type="STRING" id="335284.Pcryo_0389"/>
<dbReference type="KEGG" id="pcr:Pcryo_0389"/>
<dbReference type="eggNOG" id="COG0052">
    <property type="taxonomic scope" value="Bacteria"/>
</dbReference>
<dbReference type="HOGENOM" id="CLU_040318_1_2_6"/>
<dbReference type="Proteomes" id="UP000002425">
    <property type="component" value="Chromosome"/>
</dbReference>
<dbReference type="GO" id="GO:0022627">
    <property type="term" value="C:cytosolic small ribosomal subunit"/>
    <property type="evidence" value="ECO:0007669"/>
    <property type="project" value="TreeGrafter"/>
</dbReference>
<dbReference type="GO" id="GO:0003735">
    <property type="term" value="F:structural constituent of ribosome"/>
    <property type="evidence" value="ECO:0007669"/>
    <property type="project" value="InterPro"/>
</dbReference>
<dbReference type="GO" id="GO:0006412">
    <property type="term" value="P:translation"/>
    <property type="evidence" value="ECO:0007669"/>
    <property type="project" value="UniProtKB-UniRule"/>
</dbReference>
<dbReference type="CDD" id="cd01425">
    <property type="entry name" value="RPS2"/>
    <property type="match status" value="1"/>
</dbReference>
<dbReference type="FunFam" id="1.10.287.610:FF:000001">
    <property type="entry name" value="30S ribosomal protein S2"/>
    <property type="match status" value="1"/>
</dbReference>
<dbReference type="Gene3D" id="3.40.50.10490">
    <property type="entry name" value="Glucose-6-phosphate isomerase like protein, domain 1"/>
    <property type="match status" value="1"/>
</dbReference>
<dbReference type="Gene3D" id="1.10.287.610">
    <property type="entry name" value="Helix hairpin bin"/>
    <property type="match status" value="1"/>
</dbReference>
<dbReference type="HAMAP" id="MF_00291_B">
    <property type="entry name" value="Ribosomal_uS2_B"/>
    <property type="match status" value="1"/>
</dbReference>
<dbReference type="InterPro" id="IPR001865">
    <property type="entry name" value="Ribosomal_uS2"/>
</dbReference>
<dbReference type="InterPro" id="IPR005706">
    <property type="entry name" value="Ribosomal_uS2_bac/mit/plastid"/>
</dbReference>
<dbReference type="InterPro" id="IPR018130">
    <property type="entry name" value="Ribosomal_uS2_CS"/>
</dbReference>
<dbReference type="InterPro" id="IPR023591">
    <property type="entry name" value="Ribosomal_uS2_flav_dom_sf"/>
</dbReference>
<dbReference type="NCBIfam" id="TIGR01011">
    <property type="entry name" value="rpsB_bact"/>
    <property type="match status" value="1"/>
</dbReference>
<dbReference type="PANTHER" id="PTHR12534">
    <property type="entry name" value="30S RIBOSOMAL PROTEIN S2 PROKARYOTIC AND ORGANELLAR"/>
    <property type="match status" value="1"/>
</dbReference>
<dbReference type="PANTHER" id="PTHR12534:SF0">
    <property type="entry name" value="SMALL RIBOSOMAL SUBUNIT PROTEIN US2M"/>
    <property type="match status" value="1"/>
</dbReference>
<dbReference type="Pfam" id="PF00318">
    <property type="entry name" value="Ribosomal_S2"/>
    <property type="match status" value="1"/>
</dbReference>
<dbReference type="PRINTS" id="PR00395">
    <property type="entry name" value="RIBOSOMALS2"/>
</dbReference>
<dbReference type="SUPFAM" id="SSF52313">
    <property type="entry name" value="Ribosomal protein S2"/>
    <property type="match status" value="1"/>
</dbReference>
<dbReference type="PROSITE" id="PS00962">
    <property type="entry name" value="RIBOSOMAL_S2_1"/>
    <property type="match status" value="1"/>
</dbReference>
<dbReference type="PROSITE" id="PS00963">
    <property type="entry name" value="RIBOSOMAL_S2_2"/>
    <property type="match status" value="1"/>
</dbReference>
<accession>Q1QDT1</accession>
<feature type="chain" id="PRO_0000352026" description="Small ribosomal subunit protein uS2">
    <location>
        <begin position="1"/>
        <end position="264"/>
    </location>
</feature>
<feature type="region of interest" description="Disordered" evidence="2">
    <location>
        <begin position="233"/>
        <end position="264"/>
    </location>
</feature>
<name>RS2_PSYCK</name>
<organism>
    <name type="scientific">Psychrobacter cryohalolentis (strain ATCC BAA-1226 / DSM 17306 / VKM B-2378 / K5)</name>
    <dbReference type="NCBI Taxonomy" id="335284"/>
    <lineage>
        <taxon>Bacteria</taxon>
        <taxon>Pseudomonadati</taxon>
        <taxon>Pseudomonadota</taxon>
        <taxon>Gammaproteobacteria</taxon>
        <taxon>Moraxellales</taxon>
        <taxon>Moraxellaceae</taxon>
        <taxon>Psychrobacter</taxon>
    </lineage>
</organism>
<reference key="1">
    <citation type="submission" date="2006-03" db="EMBL/GenBank/DDBJ databases">
        <title>Complete sequence of chromosome of Psychrobacter cryohalolentis K5.</title>
        <authorList>
            <consortium name="US DOE Joint Genome Institute"/>
            <person name="Copeland A."/>
            <person name="Lucas S."/>
            <person name="Lapidus A."/>
            <person name="Barry K."/>
            <person name="Detter J.C."/>
            <person name="Glavina T."/>
            <person name="Hammon N."/>
            <person name="Israni S."/>
            <person name="Dalin E."/>
            <person name="Tice H."/>
            <person name="Pitluck S."/>
            <person name="Brettin T."/>
            <person name="Bruce D."/>
            <person name="Han C."/>
            <person name="Tapia R."/>
            <person name="Sims D.R."/>
            <person name="Gilna P."/>
            <person name="Schmutz J."/>
            <person name="Larimer F."/>
            <person name="Land M."/>
            <person name="Hauser L."/>
            <person name="Kyrpides N."/>
            <person name="Kim E."/>
            <person name="Richardson P."/>
        </authorList>
    </citation>
    <scope>NUCLEOTIDE SEQUENCE [LARGE SCALE GENOMIC DNA]</scope>
    <source>
        <strain>ATCC BAA-1226 / DSM 17306 / VKM B-2378 / K5</strain>
    </source>
</reference>
<keyword id="KW-0687">Ribonucleoprotein</keyword>
<keyword id="KW-0689">Ribosomal protein</keyword>
<proteinExistence type="inferred from homology"/>
<protein>
    <recommendedName>
        <fullName evidence="1">Small ribosomal subunit protein uS2</fullName>
    </recommendedName>
    <alternativeName>
        <fullName evidence="3">30S ribosomal protein S2</fullName>
    </alternativeName>
</protein>
<gene>
    <name evidence="1" type="primary">rpsB</name>
    <name type="ordered locus">Pcryo_0389</name>
</gene>
<sequence length="264" mass="28884">MATKNPTKIEMRDLLQAGAHFGHQTRFWNPKMGPYIFGARNKIHIINLEHTVKAFNEALTYVNGLAAKKNKVLFVGTKRAASGVIAEQAARAGMPYVDHRWLGGMLTNWKTLRQSINRLKELEKQAEDGTFAKLTKREALERTRDMEKLERSLGGIKDMGGLPDAIFVVDVDHEAIAIKEAKNLGIPVIGIVDTNSNPDNVDYIIPANDDAIRAVTLYVTSMADAIIAGKEYAQTQAGGKAEQEAPATEEAADAQTEEAATPAE</sequence>
<comment type="similarity">
    <text evidence="1">Belongs to the universal ribosomal protein uS2 family.</text>
</comment>
<evidence type="ECO:0000255" key="1">
    <source>
        <dbReference type="HAMAP-Rule" id="MF_00291"/>
    </source>
</evidence>
<evidence type="ECO:0000256" key="2">
    <source>
        <dbReference type="SAM" id="MobiDB-lite"/>
    </source>
</evidence>
<evidence type="ECO:0000305" key="3"/>